<gene>
    <name evidence="7" type="primary">CLIPC9</name>
    <name evidence="8" type="ORF">AGAP004719</name>
</gene>
<keyword id="KW-1015">Disulfide bond</keyword>
<keyword id="KW-0325">Glycoprotein</keyword>
<keyword id="KW-0378">Hydrolase</keyword>
<keyword id="KW-0391">Immunity</keyword>
<keyword id="KW-0399">Innate immunity</keyword>
<keyword id="KW-0645">Protease</keyword>
<keyword id="KW-1185">Reference proteome</keyword>
<keyword id="KW-0964">Secreted</keyword>
<keyword id="KW-0720">Serine protease</keyword>
<keyword id="KW-0732">Signal</keyword>
<keyword id="KW-0865">Zymogen</keyword>
<accession>A0A1S4GMJ4</accession>
<accession>Q7PJH3</accession>
<protein>
    <recommendedName>
        <fullName evidence="7">CLIP domain-containing serine protease C9</fullName>
        <ecNumber evidence="2">3.4.21.-</ecNumber>
    </recommendedName>
    <component>
        <recommendedName>
            <fullName evidence="7">CLIP domain-containing serine protease C9 subunit p12</fullName>
        </recommendedName>
    </component>
    <component>
        <recommendedName>
            <fullName evidence="7">CLIP domain-containing serine protease C9 subunit p30</fullName>
        </recommendedName>
    </component>
</protein>
<name>CLC9_ANOGA</name>
<organism evidence="9">
    <name type="scientific">Anopheles gambiae</name>
    <name type="common">African malaria mosquito</name>
    <dbReference type="NCBI Taxonomy" id="7165"/>
    <lineage>
        <taxon>Eukaryota</taxon>
        <taxon>Metazoa</taxon>
        <taxon>Ecdysozoa</taxon>
        <taxon>Arthropoda</taxon>
        <taxon>Hexapoda</taxon>
        <taxon>Insecta</taxon>
        <taxon>Pterygota</taxon>
        <taxon>Neoptera</taxon>
        <taxon>Endopterygota</taxon>
        <taxon>Diptera</taxon>
        <taxon>Nematocera</taxon>
        <taxon>Culicoidea</taxon>
        <taxon>Culicidae</taxon>
        <taxon>Anophelinae</taxon>
        <taxon>Anopheles</taxon>
    </lineage>
</organism>
<evidence type="ECO:0000250" key="1">
    <source>
        <dbReference type="UniProtKB" id="Q9XXV0"/>
    </source>
</evidence>
<evidence type="ECO:0000255" key="2">
    <source>
        <dbReference type="PROSITE-ProRule" id="PRU00274"/>
    </source>
</evidence>
<evidence type="ECO:0000255" key="3">
    <source>
        <dbReference type="PROSITE-ProRule" id="PRU00498"/>
    </source>
</evidence>
<evidence type="ECO:0000255" key="4">
    <source>
        <dbReference type="PROSITE-ProRule" id="PRU01236"/>
    </source>
</evidence>
<evidence type="ECO:0000269" key="5">
    <source>
    </source>
</evidence>
<evidence type="ECO:0000269" key="6">
    <source>
    </source>
</evidence>
<evidence type="ECO:0000303" key="7">
    <source>
    </source>
</evidence>
<evidence type="ECO:0000305" key="8"/>
<evidence type="ECO:0000312" key="9">
    <source>
        <dbReference type="Proteomes" id="UP000007062"/>
    </source>
</evidence>
<feature type="signal peptide" evidence="8">
    <location>
        <begin position="1"/>
        <end status="unknown"/>
    </location>
</feature>
<feature type="chain" id="PRO_0000455770" description="CLIP domain-containing serine protease C9 subunit p12" evidence="7">
    <location>
        <begin status="unknown"/>
        <end position="108"/>
    </location>
</feature>
<feature type="chain" id="PRO_0000455771" description="CLIP domain-containing serine protease C9 subunit p30" evidence="7">
    <location>
        <begin position="109"/>
        <end position="356"/>
    </location>
</feature>
<feature type="chain" id="PRO_0000455769" description="CLIP domain-containing serine protease C9">
    <location>
        <begin status="unknown"/>
        <end position="356"/>
    </location>
</feature>
<feature type="domain" description="Clip" evidence="4">
    <location>
        <begin position="49"/>
        <end position="94"/>
    </location>
</feature>
<feature type="domain" description="Peptidase S1" evidence="2">
    <location>
        <begin position="109"/>
        <end position="351"/>
    </location>
</feature>
<feature type="active site" description="Charge relay system" evidence="2">
    <location>
        <position position="154"/>
    </location>
</feature>
<feature type="active site" description="Charge relay system" evidence="2">
    <location>
        <position position="194"/>
    </location>
</feature>
<feature type="active site" description="Charge relay system" evidence="2">
    <location>
        <position position="304"/>
    </location>
</feature>
<feature type="site" description="Cleavage" evidence="1">
    <location>
        <begin position="108"/>
        <end position="109"/>
    </location>
</feature>
<feature type="glycosylation site" description="N-linked (GlcNAc...) asparagine" evidence="3">
    <location>
        <position position="62"/>
    </location>
</feature>
<feature type="glycosylation site" description="N-linked (GlcNAc...) asparagine" evidence="3">
    <location>
        <position position="292"/>
    </location>
</feature>
<feature type="disulfide bond" evidence="4">
    <location>
        <begin position="50"/>
        <end position="93"/>
    </location>
</feature>
<feature type="disulfide bond" evidence="4">
    <location>
        <begin position="60"/>
        <end position="83"/>
    </location>
</feature>
<feature type="disulfide bond" evidence="4">
    <location>
        <begin position="66"/>
        <end position="94"/>
    </location>
</feature>
<feature type="disulfide bond" evidence="2">
    <location>
        <begin position="139"/>
        <end position="155"/>
    </location>
</feature>
<feature type="disulfide bond" evidence="2">
    <location>
        <begin position="258"/>
        <end position="284"/>
    </location>
</feature>
<feature type="disulfide bond" evidence="2">
    <location>
        <begin position="300"/>
        <end position="328"/>
    </location>
</feature>
<sequence length="356" mass="39687">MCILTLVERKHLKNMVHVRLLVMMHILIIYSTFGAVRRPINIRVLEGNSCDTPQVIGGKCMNISLCDPAFVHSIAYQEHTPVCQQNAFYRVICCQPFLDFCENSKQFQIMHGIEAEPGMFPHLARLGLKSEEDGIAWTCSANIISERFLLTAAHCNPVNIAGLGCAESMQCDQQNTVKSFISNPKYKTSFKYHDIALVELEQNIRFNKRVLPICPYISKTDLHESEDLVIAGWGATESHFQSPRLMFATVRTVLQNDCKDHYASLLKASPNKKLHQGITDEMYCAQGALVDNVTEYIDACSGDSGGPLQTKQNNNLYLIGVISTGFGCGSSSPGLYTRVASYFGWIKETVSATRDN</sequence>
<dbReference type="EC" id="3.4.21.-" evidence="2"/>
<dbReference type="EMBL" id="AAAB01008968">
    <property type="protein sequence ID" value="EAA43757.3"/>
    <property type="status" value="ALT_SEQ"/>
    <property type="molecule type" value="Genomic_DNA"/>
</dbReference>
<dbReference type="RefSeq" id="XP_318110.3">
    <property type="nucleotide sequence ID" value="XM_318110.4"/>
</dbReference>
<dbReference type="SMR" id="A0A1S4GMJ4"/>
<dbReference type="STRING" id="7165.Q7PJH3"/>
<dbReference type="GlyCosmos" id="A0A1S4GMJ4">
    <property type="glycosylation" value="2 sites, No reported glycans"/>
</dbReference>
<dbReference type="PaxDb" id="7165-AGAP004719-PA"/>
<dbReference type="EnsemblMetazoa" id="AGAP004719-RA">
    <property type="protein sequence ID" value="AGAP004719-PA"/>
    <property type="gene ID" value="AGAP004719"/>
</dbReference>
<dbReference type="VEuPathDB" id="VectorBase:AGAMI1_001581"/>
<dbReference type="VEuPathDB" id="VectorBase:AGAP004719"/>
<dbReference type="eggNOG" id="KOG3627">
    <property type="taxonomic scope" value="Eukaryota"/>
</dbReference>
<dbReference type="HOGENOM" id="CLU_006842_0_3_1"/>
<dbReference type="InParanoid" id="A0A1S4GMJ4"/>
<dbReference type="Proteomes" id="UP000007062">
    <property type="component" value="Chromosome 2L"/>
</dbReference>
<dbReference type="GO" id="GO:0005615">
    <property type="term" value="C:extracellular space"/>
    <property type="evidence" value="ECO:0000314"/>
    <property type="project" value="UniProtKB"/>
</dbReference>
<dbReference type="GO" id="GO:0004252">
    <property type="term" value="F:serine-type endopeptidase activity"/>
    <property type="evidence" value="ECO:0007669"/>
    <property type="project" value="InterPro"/>
</dbReference>
<dbReference type="GO" id="GO:0042742">
    <property type="term" value="P:defense response to bacterium"/>
    <property type="evidence" value="ECO:0000315"/>
    <property type="project" value="UniProtKB"/>
</dbReference>
<dbReference type="GO" id="GO:0140546">
    <property type="term" value="P:defense response to symbiont"/>
    <property type="evidence" value="ECO:0000315"/>
    <property type="project" value="UniProtKB"/>
</dbReference>
<dbReference type="GO" id="GO:0045087">
    <property type="term" value="P:innate immune response"/>
    <property type="evidence" value="ECO:0000318"/>
    <property type="project" value="GO_Central"/>
</dbReference>
<dbReference type="GO" id="GO:0035008">
    <property type="term" value="P:positive regulation of melanization defense response"/>
    <property type="evidence" value="ECO:0000315"/>
    <property type="project" value="UniProtKB"/>
</dbReference>
<dbReference type="GO" id="GO:0006508">
    <property type="term" value="P:proteolysis"/>
    <property type="evidence" value="ECO:0007669"/>
    <property type="project" value="UniProtKB-KW"/>
</dbReference>
<dbReference type="CDD" id="cd00190">
    <property type="entry name" value="Tryp_SPc"/>
    <property type="match status" value="1"/>
</dbReference>
<dbReference type="Gene3D" id="2.40.10.10">
    <property type="entry name" value="Trypsin-like serine proteases"/>
    <property type="match status" value="1"/>
</dbReference>
<dbReference type="InterPro" id="IPR051333">
    <property type="entry name" value="CLIP_Serine_Protease"/>
</dbReference>
<dbReference type="InterPro" id="IPR009003">
    <property type="entry name" value="Peptidase_S1_PA"/>
</dbReference>
<dbReference type="InterPro" id="IPR043504">
    <property type="entry name" value="Peptidase_S1_PA_chymotrypsin"/>
</dbReference>
<dbReference type="InterPro" id="IPR001314">
    <property type="entry name" value="Peptidase_S1A"/>
</dbReference>
<dbReference type="InterPro" id="IPR001254">
    <property type="entry name" value="Trypsin_dom"/>
</dbReference>
<dbReference type="InterPro" id="IPR018114">
    <property type="entry name" value="TRYPSIN_HIS"/>
</dbReference>
<dbReference type="InterPro" id="IPR033116">
    <property type="entry name" value="TRYPSIN_SER"/>
</dbReference>
<dbReference type="PANTHER" id="PTHR24260">
    <property type="match status" value="1"/>
</dbReference>
<dbReference type="PANTHER" id="PTHR24260:SF147">
    <property type="entry name" value="EG:BACR7A4.3 PROTEIN-RELATED"/>
    <property type="match status" value="1"/>
</dbReference>
<dbReference type="Pfam" id="PF00089">
    <property type="entry name" value="Trypsin"/>
    <property type="match status" value="1"/>
</dbReference>
<dbReference type="PRINTS" id="PR00722">
    <property type="entry name" value="CHYMOTRYPSIN"/>
</dbReference>
<dbReference type="SMART" id="SM00020">
    <property type="entry name" value="Tryp_SPc"/>
    <property type="match status" value="1"/>
</dbReference>
<dbReference type="SUPFAM" id="SSF50494">
    <property type="entry name" value="Trypsin-like serine proteases"/>
    <property type="match status" value="1"/>
</dbReference>
<dbReference type="PROSITE" id="PS51888">
    <property type="entry name" value="CLIP"/>
    <property type="match status" value="1"/>
</dbReference>
<dbReference type="PROSITE" id="PS50240">
    <property type="entry name" value="TRYPSIN_DOM"/>
    <property type="match status" value="1"/>
</dbReference>
<dbReference type="PROSITE" id="PS00134">
    <property type="entry name" value="TRYPSIN_HIS"/>
    <property type="match status" value="1"/>
</dbReference>
<dbReference type="PROSITE" id="PS00135">
    <property type="entry name" value="TRYPSIN_SER"/>
    <property type="match status" value="1"/>
</dbReference>
<proteinExistence type="evidence at protein level"/>
<reference evidence="9" key="1">
    <citation type="journal article" date="2002" name="Science">
        <title>The genome sequence of the malaria mosquito Anopheles gambiae.</title>
        <authorList>
            <person name="Holt R.A."/>
            <person name="Subramanian G.M."/>
            <person name="Halpern A."/>
            <person name="Sutton G.G."/>
            <person name="Charlab R."/>
            <person name="Nusskern D.R."/>
            <person name="Wincker P."/>
            <person name="Clark A.G."/>
            <person name="Ribeiro J.M.C."/>
            <person name="Wides R."/>
            <person name="Salzberg S.L."/>
            <person name="Loftus B.J."/>
            <person name="Yandell M.D."/>
            <person name="Majoros W.H."/>
            <person name="Rusch D.B."/>
            <person name="Lai Z."/>
            <person name="Kraft C.L."/>
            <person name="Abril J.F."/>
            <person name="Anthouard V."/>
            <person name="Arensburger P."/>
            <person name="Atkinson P.W."/>
            <person name="Baden H."/>
            <person name="de Berardinis V."/>
            <person name="Baldwin D."/>
            <person name="Benes V."/>
            <person name="Biedler J."/>
            <person name="Blass C."/>
            <person name="Bolanos R."/>
            <person name="Boscus D."/>
            <person name="Barnstead M."/>
            <person name="Cai S."/>
            <person name="Center A."/>
            <person name="Chaturverdi K."/>
            <person name="Christophides G.K."/>
            <person name="Chrystal M.A.M."/>
            <person name="Clamp M."/>
            <person name="Cravchik A."/>
            <person name="Curwen V."/>
            <person name="Dana A."/>
            <person name="Delcher A."/>
            <person name="Dew I."/>
            <person name="Evans C.A."/>
            <person name="Flanigan M."/>
            <person name="Grundschober-Freimoser A."/>
            <person name="Friedli L."/>
            <person name="Gu Z."/>
            <person name="Guan P."/>
            <person name="Guigo R."/>
            <person name="Hillenmeyer M.E."/>
            <person name="Hladun S.L."/>
            <person name="Hogan J.R."/>
            <person name="Hong Y.S."/>
            <person name="Hoover J."/>
            <person name="Jaillon O."/>
            <person name="Ke Z."/>
            <person name="Kodira C.D."/>
            <person name="Kokoza E."/>
            <person name="Koutsos A."/>
            <person name="Letunic I."/>
            <person name="Levitsky A.A."/>
            <person name="Liang Y."/>
            <person name="Lin J.-J."/>
            <person name="Lobo N.F."/>
            <person name="Lopez J.R."/>
            <person name="Malek J.A."/>
            <person name="McIntosh T.C."/>
            <person name="Meister S."/>
            <person name="Miller J.R."/>
            <person name="Mobarry C."/>
            <person name="Mongin E."/>
            <person name="Murphy S.D."/>
            <person name="O'Brochta D.A."/>
            <person name="Pfannkoch C."/>
            <person name="Qi R."/>
            <person name="Regier M.A."/>
            <person name="Remington K."/>
            <person name="Shao H."/>
            <person name="Sharakhova M.V."/>
            <person name="Sitter C.D."/>
            <person name="Shetty J."/>
            <person name="Smith T.J."/>
            <person name="Strong R."/>
            <person name="Sun J."/>
            <person name="Thomasova D."/>
            <person name="Ton L.Q."/>
            <person name="Topalis P."/>
            <person name="Tu Z.J."/>
            <person name="Unger M.F."/>
            <person name="Walenz B."/>
            <person name="Wang A.H."/>
            <person name="Wang J."/>
            <person name="Wang M."/>
            <person name="Wang X."/>
            <person name="Woodford K.J."/>
            <person name="Wortman J.R."/>
            <person name="Wu M."/>
            <person name="Yao A."/>
            <person name="Zdobnov E.M."/>
            <person name="Zhang H."/>
            <person name="Zhao Q."/>
            <person name="Zhao S."/>
            <person name="Zhu S.C."/>
            <person name="Zhimulev I."/>
            <person name="Coluzzi M."/>
            <person name="della Torre A."/>
            <person name="Roth C.W."/>
            <person name="Louis C."/>
            <person name="Kalush F."/>
            <person name="Mural R.J."/>
            <person name="Myers E.W."/>
            <person name="Adams M.D."/>
            <person name="Smith H.O."/>
            <person name="Broder S."/>
            <person name="Gardner M.J."/>
            <person name="Fraser C.M."/>
            <person name="Birney E."/>
            <person name="Bork P."/>
            <person name="Brey P.T."/>
            <person name="Venter J.C."/>
            <person name="Weissenbach J."/>
            <person name="Kafatos F.C."/>
            <person name="Collins F.H."/>
            <person name="Hoffman S.L."/>
        </authorList>
    </citation>
    <scope>NUCLEOTIDE SEQUENCE [LARGE SCALE GENOMIC DNA]</scope>
    <source>
        <strain evidence="9">PEST</strain>
    </source>
</reference>
<reference evidence="8" key="2">
    <citation type="journal article" date="2020" name="PLoS Pathog.">
        <title>The CLIP-domain serine protease CLIPC9 regulates melanization downstream of SPCLIP1, CLIPA8, and CLIPA28 in the malaria vector Anopheles gambiae.</title>
        <authorList>
            <person name="Sousa G.L."/>
            <person name="Bishnoi R."/>
            <person name="Baxter R.H.G."/>
            <person name="Povelones M."/>
        </authorList>
    </citation>
    <scope>FUNCTION</scope>
    <scope>SUBUNIT</scope>
    <scope>SUBCELLULAR LOCATION</scope>
    <scope>PROTEOLYTIC CLEAVAGE</scope>
    <scope>DISRUPTION PHENOTYPE</scope>
    <source>
        <strain evidence="6">G3</strain>
    </source>
</reference>
<comment type="function">
    <text evidence="6">Probable serine protease which plays an essential role in the innate immune response against bacteria and protozoa infection by activating the melanization cascade (PubMed:33045027). In the susceptible strain G3, appears to be dispensable for ookinete elimination which occurs by lysis (PubMed:33045027).</text>
</comment>
<comment type="subunit">
    <text evidence="6">In the active form, heterodimer of a p12 subunit and a p30 subunit; disulfide-linked.</text>
</comment>
<comment type="subcellular location">
    <subcellularLocation>
        <location evidence="6">Secreted</location>
    </subcellularLocation>
    <text evidence="6">Secreted into the hemolymph (PubMed:33045027). Recruited by CLIPA8 to microbial surfaces where it is cleaved into the two chain active form (PubMed:33045027).</text>
</comment>
<comment type="domain">
    <text evidence="4">The clip domain consists of 35-55 residues which are 'knitted' together usually by 3 conserved disulfide bonds forming a clip-like compact structure.</text>
</comment>
<comment type="PTM">
    <text evidence="5">Secreted as a full-length protein (PubMed:12364791). Following bacterium E.coli infection, proteolytically cleaved into two chains, p12 and p30, which remain covalently linked (PubMed:12364791).</text>
</comment>
<comment type="disruption phenotype">
    <text evidence="6">RNAi-mediated knockdown causes a loss in phenoloxidase (PO) activity and a reduction in microbe melanization in response to E.coli infection (PubMed:33045027). RNAi-mediated knockdown in the susceptible strain G3 infected with P.berghei, does not affect the number of oocysts and ookinete melanization; however, severely reduces ookinete melanization caused by CTL4 RNAi-mediated knockdown (PubMed:33045027).</text>
</comment>
<comment type="similarity">
    <text evidence="4">Belongs to the peptidase S1 family. CLIP subfamily.</text>
</comment>
<comment type="sequence caution" evidence="8">
    <conflict type="erroneous gene model prediction">
        <sequence resource="EMBL-CDS" id="EAA43757"/>
    </conflict>
</comment>